<name>RS3_PSYIN</name>
<keyword id="KW-1185">Reference proteome</keyword>
<keyword id="KW-0687">Ribonucleoprotein</keyword>
<keyword id="KW-0689">Ribosomal protein</keyword>
<keyword id="KW-0694">RNA-binding</keyword>
<keyword id="KW-0699">rRNA-binding</keyword>
<organism>
    <name type="scientific">Psychromonas ingrahamii (strain DSM 17664 / CCUG 51855 / 37)</name>
    <dbReference type="NCBI Taxonomy" id="357804"/>
    <lineage>
        <taxon>Bacteria</taxon>
        <taxon>Pseudomonadati</taxon>
        <taxon>Pseudomonadota</taxon>
        <taxon>Gammaproteobacteria</taxon>
        <taxon>Alteromonadales</taxon>
        <taxon>Psychromonadaceae</taxon>
        <taxon>Psychromonas</taxon>
    </lineage>
</organism>
<gene>
    <name evidence="1" type="primary">rpsC</name>
    <name type="ordered locus">Ping_3518</name>
</gene>
<comment type="function">
    <text evidence="1">Binds the lower part of the 30S subunit head. Binds mRNA in the 70S ribosome, positioning it for translation.</text>
</comment>
<comment type="subunit">
    <text evidence="1">Part of the 30S ribosomal subunit. Forms a tight complex with proteins S10 and S14.</text>
</comment>
<comment type="similarity">
    <text evidence="1">Belongs to the universal ribosomal protein uS3 family.</text>
</comment>
<evidence type="ECO:0000255" key="1">
    <source>
        <dbReference type="HAMAP-Rule" id="MF_01309"/>
    </source>
</evidence>
<evidence type="ECO:0000305" key="2"/>
<reference key="1">
    <citation type="journal article" date="2008" name="BMC Genomics">
        <title>Genomics of an extreme psychrophile, Psychromonas ingrahamii.</title>
        <authorList>
            <person name="Riley M."/>
            <person name="Staley J.T."/>
            <person name="Danchin A."/>
            <person name="Wang T.Z."/>
            <person name="Brettin T.S."/>
            <person name="Hauser L.J."/>
            <person name="Land M.L."/>
            <person name="Thompson L.S."/>
        </authorList>
    </citation>
    <scope>NUCLEOTIDE SEQUENCE [LARGE SCALE GENOMIC DNA]</scope>
    <source>
        <strain>DSM 17664 / CCUG 51855 / 37</strain>
    </source>
</reference>
<dbReference type="EMBL" id="CP000510">
    <property type="protein sequence ID" value="ABM05201.1"/>
    <property type="molecule type" value="Genomic_DNA"/>
</dbReference>
<dbReference type="RefSeq" id="WP_011771749.1">
    <property type="nucleotide sequence ID" value="NC_008709.1"/>
</dbReference>
<dbReference type="SMR" id="A1T0D6"/>
<dbReference type="STRING" id="357804.Ping_3518"/>
<dbReference type="KEGG" id="pin:Ping_3518"/>
<dbReference type="eggNOG" id="COG0092">
    <property type="taxonomic scope" value="Bacteria"/>
</dbReference>
<dbReference type="HOGENOM" id="CLU_058591_0_2_6"/>
<dbReference type="OrthoDB" id="9806396at2"/>
<dbReference type="Proteomes" id="UP000000639">
    <property type="component" value="Chromosome"/>
</dbReference>
<dbReference type="GO" id="GO:0022627">
    <property type="term" value="C:cytosolic small ribosomal subunit"/>
    <property type="evidence" value="ECO:0007669"/>
    <property type="project" value="TreeGrafter"/>
</dbReference>
<dbReference type="GO" id="GO:0003729">
    <property type="term" value="F:mRNA binding"/>
    <property type="evidence" value="ECO:0007669"/>
    <property type="project" value="UniProtKB-UniRule"/>
</dbReference>
<dbReference type="GO" id="GO:0019843">
    <property type="term" value="F:rRNA binding"/>
    <property type="evidence" value="ECO:0007669"/>
    <property type="project" value="UniProtKB-UniRule"/>
</dbReference>
<dbReference type="GO" id="GO:0003735">
    <property type="term" value="F:structural constituent of ribosome"/>
    <property type="evidence" value="ECO:0007669"/>
    <property type="project" value="InterPro"/>
</dbReference>
<dbReference type="GO" id="GO:0006412">
    <property type="term" value="P:translation"/>
    <property type="evidence" value="ECO:0007669"/>
    <property type="project" value="UniProtKB-UniRule"/>
</dbReference>
<dbReference type="CDD" id="cd02412">
    <property type="entry name" value="KH-II_30S_S3"/>
    <property type="match status" value="1"/>
</dbReference>
<dbReference type="FunFam" id="3.30.1140.32:FF:000001">
    <property type="entry name" value="30S ribosomal protein S3"/>
    <property type="match status" value="1"/>
</dbReference>
<dbReference type="FunFam" id="3.30.300.20:FF:000001">
    <property type="entry name" value="30S ribosomal protein S3"/>
    <property type="match status" value="1"/>
</dbReference>
<dbReference type="Gene3D" id="3.30.300.20">
    <property type="match status" value="1"/>
</dbReference>
<dbReference type="Gene3D" id="3.30.1140.32">
    <property type="entry name" value="Ribosomal protein S3, C-terminal domain"/>
    <property type="match status" value="1"/>
</dbReference>
<dbReference type="HAMAP" id="MF_01309_B">
    <property type="entry name" value="Ribosomal_uS3_B"/>
    <property type="match status" value="1"/>
</dbReference>
<dbReference type="InterPro" id="IPR004087">
    <property type="entry name" value="KH_dom"/>
</dbReference>
<dbReference type="InterPro" id="IPR015946">
    <property type="entry name" value="KH_dom-like_a/b"/>
</dbReference>
<dbReference type="InterPro" id="IPR004044">
    <property type="entry name" value="KH_dom_type_2"/>
</dbReference>
<dbReference type="InterPro" id="IPR009019">
    <property type="entry name" value="KH_sf_prok-type"/>
</dbReference>
<dbReference type="InterPro" id="IPR036419">
    <property type="entry name" value="Ribosomal_S3_C_sf"/>
</dbReference>
<dbReference type="InterPro" id="IPR005704">
    <property type="entry name" value="Ribosomal_uS3_bac-typ"/>
</dbReference>
<dbReference type="InterPro" id="IPR001351">
    <property type="entry name" value="Ribosomal_uS3_C"/>
</dbReference>
<dbReference type="InterPro" id="IPR018280">
    <property type="entry name" value="Ribosomal_uS3_CS"/>
</dbReference>
<dbReference type="NCBIfam" id="TIGR01009">
    <property type="entry name" value="rpsC_bact"/>
    <property type="match status" value="1"/>
</dbReference>
<dbReference type="PANTHER" id="PTHR11760">
    <property type="entry name" value="30S/40S RIBOSOMAL PROTEIN S3"/>
    <property type="match status" value="1"/>
</dbReference>
<dbReference type="PANTHER" id="PTHR11760:SF19">
    <property type="entry name" value="SMALL RIBOSOMAL SUBUNIT PROTEIN US3C"/>
    <property type="match status" value="1"/>
</dbReference>
<dbReference type="Pfam" id="PF07650">
    <property type="entry name" value="KH_2"/>
    <property type="match status" value="1"/>
</dbReference>
<dbReference type="Pfam" id="PF00189">
    <property type="entry name" value="Ribosomal_S3_C"/>
    <property type="match status" value="1"/>
</dbReference>
<dbReference type="SMART" id="SM00322">
    <property type="entry name" value="KH"/>
    <property type="match status" value="1"/>
</dbReference>
<dbReference type="SUPFAM" id="SSF54814">
    <property type="entry name" value="Prokaryotic type KH domain (KH-domain type II)"/>
    <property type="match status" value="1"/>
</dbReference>
<dbReference type="SUPFAM" id="SSF54821">
    <property type="entry name" value="Ribosomal protein S3 C-terminal domain"/>
    <property type="match status" value="1"/>
</dbReference>
<dbReference type="PROSITE" id="PS50823">
    <property type="entry name" value="KH_TYPE_2"/>
    <property type="match status" value="1"/>
</dbReference>
<dbReference type="PROSITE" id="PS00548">
    <property type="entry name" value="RIBOSOMAL_S3"/>
    <property type="match status" value="1"/>
</dbReference>
<sequence length="230" mass="25502">MGQKVHPNGIRLGITKAFSSTWYAGKKDFAANLFSDFEIRKFLTEKLKNASLSKITIERPAKSVRVTIHTARPGVVIGKKGEDVEKLRTAIAKMAGVPAQINISEVRKPELDAKLVADSISSQLERRVMFRRAMKRAVQNAMRLGAKGIKVQVGGRLGGAEIARSEWYREGRVPLHTLRADIDYSTSEAHTVYGIIGVKVWIFKGEVLGGLPLQVEEQQPSKPKRKSRGK</sequence>
<feature type="chain" id="PRO_0000293860" description="Small ribosomal subunit protein uS3">
    <location>
        <begin position="1"/>
        <end position="230"/>
    </location>
</feature>
<feature type="domain" description="KH type-2" evidence="1">
    <location>
        <begin position="39"/>
        <end position="107"/>
    </location>
</feature>
<protein>
    <recommendedName>
        <fullName evidence="1">Small ribosomal subunit protein uS3</fullName>
    </recommendedName>
    <alternativeName>
        <fullName evidence="2">30S ribosomal protein S3</fullName>
    </alternativeName>
</protein>
<accession>A1T0D6</accession>
<proteinExistence type="inferred from homology"/>